<keyword id="KW-0285">Flavoprotein</keyword>
<keyword id="KW-0288">FMN</keyword>
<keyword id="KW-0560">Oxidoreductase</keyword>
<keyword id="KW-0664">Pyridoxine biosynthesis</keyword>
<evidence type="ECO:0000255" key="1">
    <source>
        <dbReference type="HAMAP-Rule" id="MF_01629"/>
    </source>
</evidence>
<organism>
    <name type="scientific">Cupriavidus pinatubonensis (strain JMP 134 / LMG 1197)</name>
    <name type="common">Cupriavidus necator (strain JMP 134)</name>
    <dbReference type="NCBI Taxonomy" id="264198"/>
    <lineage>
        <taxon>Bacteria</taxon>
        <taxon>Pseudomonadati</taxon>
        <taxon>Pseudomonadota</taxon>
        <taxon>Betaproteobacteria</taxon>
        <taxon>Burkholderiales</taxon>
        <taxon>Burkholderiaceae</taxon>
        <taxon>Cupriavidus</taxon>
    </lineage>
</organism>
<reference key="1">
    <citation type="journal article" date="2010" name="PLoS ONE">
        <title>The complete multipartite genome sequence of Cupriavidus necator JMP134, a versatile pollutant degrader.</title>
        <authorList>
            <person name="Lykidis A."/>
            <person name="Perez-Pantoja D."/>
            <person name="Ledger T."/>
            <person name="Mavromatis K."/>
            <person name="Anderson I.J."/>
            <person name="Ivanova N.N."/>
            <person name="Hooper S.D."/>
            <person name="Lapidus A."/>
            <person name="Lucas S."/>
            <person name="Gonzalez B."/>
            <person name="Kyrpides N.C."/>
        </authorList>
    </citation>
    <scope>NUCLEOTIDE SEQUENCE [LARGE SCALE GENOMIC DNA]</scope>
    <source>
        <strain>JMP134 / LMG 1197</strain>
    </source>
</reference>
<accession>Q474I9</accession>
<name>PDXH_CUPPJ</name>
<protein>
    <recommendedName>
        <fullName evidence="1">Pyridoxine/pyridoxamine 5'-phosphate oxidase</fullName>
        <ecNumber evidence="1">1.4.3.5</ecNumber>
    </recommendedName>
    <alternativeName>
        <fullName evidence="1">PNP/PMP oxidase</fullName>
        <shortName evidence="1">PNPOx</shortName>
    </alternativeName>
    <alternativeName>
        <fullName evidence="1">Pyridoxal 5'-phosphate synthase</fullName>
    </alternativeName>
</protein>
<proteinExistence type="inferred from homology"/>
<dbReference type="EC" id="1.4.3.5" evidence="1"/>
<dbReference type="EMBL" id="CP000090">
    <property type="protein sequence ID" value="AAZ60194.1"/>
    <property type="molecule type" value="Genomic_DNA"/>
</dbReference>
<dbReference type="SMR" id="Q474I9"/>
<dbReference type="STRING" id="264198.Reut_A0815"/>
<dbReference type="KEGG" id="reu:Reut_A0815"/>
<dbReference type="eggNOG" id="COG0259">
    <property type="taxonomic scope" value="Bacteria"/>
</dbReference>
<dbReference type="HOGENOM" id="CLU_032263_2_2_4"/>
<dbReference type="OrthoDB" id="9780392at2"/>
<dbReference type="UniPathway" id="UPA01068">
    <property type="reaction ID" value="UER00304"/>
</dbReference>
<dbReference type="UniPathway" id="UPA01068">
    <property type="reaction ID" value="UER00305"/>
</dbReference>
<dbReference type="GO" id="GO:0010181">
    <property type="term" value="F:FMN binding"/>
    <property type="evidence" value="ECO:0007669"/>
    <property type="project" value="UniProtKB-UniRule"/>
</dbReference>
<dbReference type="GO" id="GO:0004733">
    <property type="term" value="F:pyridoxamine phosphate oxidase activity"/>
    <property type="evidence" value="ECO:0007669"/>
    <property type="project" value="UniProtKB-UniRule"/>
</dbReference>
<dbReference type="GO" id="GO:0008615">
    <property type="term" value="P:pyridoxine biosynthetic process"/>
    <property type="evidence" value="ECO:0007669"/>
    <property type="project" value="UniProtKB-KW"/>
</dbReference>
<dbReference type="FunFam" id="2.30.110.10:FF:000005">
    <property type="entry name" value="NAD(P)H-hydrate epimerase"/>
    <property type="match status" value="1"/>
</dbReference>
<dbReference type="Gene3D" id="2.30.110.10">
    <property type="entry name" value="Electron Transport, Fmn-binding Protein, Chain A"/>
    <property type="match status" value="1"/>
</dbReference>
<dbReference type="HAMAP" id="MF_01629">
    <property type="entry name" value="PdxH"/>
    <property type="match status" value="1"/>
</dbReference>
<dbReference type="InterPro" id="IPR000659">
    <property type="entry name" value="Pyridox_Oxase"/>
</dbReference>
<dbReference type="InterPro" id="IPR019740">
    <property type="entry name" value="Pyridox_Oxase_CS"/>
</dbReference>
<dbReference type="InterPro" id="IPR011576">
    <property type="entry name" value="Pyridox_Oxase_N"/>
</dbReference>
<dbReference type="InterPro" id="IPR019576">
    <property type="entry name" value="Pyridoxamine_oxidase_dimer_C"/>
</dbReference>
<dbReference type="InterPro" id="IPR012349">
    <property type="entry name" value="Split_barrel_FMN-bd"/>
</dbReference>
<dbReference type="NCBIfam" id="TIGR00558">
    <property type="entry name" value="pdxH"/>
    <property type="match status" value="1"/>
</dbReference>
<dbReference type="NCBIfam" id="NF004231">
    <property type="entry name" value="PRK05679.1"/>
    <property type="match status" value="1"/>
</dbReference>
<dbReference type="PANTHER" id="PTHR10851:SF0">
    <property type="entry name" value="PYRIDOXINE-5'-PHOSPHATE OXIDASE"/>
    <property type="match status" value="1"/>
</dbReference>
<dbReference type="PANTHER" id="PTHR10851">
    <property type="entry name" value="PYRIDOXINE-5-PHOSPHATE OXIDASE"/>
    <property type="match status" value="1"/>
</dbReference>
<dbReference type="Pfam" id="PF10590">
    <property type="entry name" value="PNP_phzG_C"/>
    <property type="match status" value="1"/>
</dbReference>
<dbReference type="Pfam" id="PF01243">
    <property type="entry name" value="PNPOx_N"/>
    <property type="match status" value="1"/>
</dbReference>
<dbReference type="PIRSF" id="PIRSF000190">
    <property type="entry name" value="Pyd_amn-ph_oxd"/>
    <property type="match status" value="1"/>
</dbReference>
<dbReference type="SUPFAM" id="SSF50475">
    <property type="entry name" value="FMN-binding split barrel"/>
    <property type="match status" value="1"/>
</dbReference>
<dbReference type="PROSITE" id="PS01064">
    <property type="entry name" value="PYRIDOX_OXIDASE"/>
    <property type="match status" value="1"/>
</dbReference>
<gene>
    <name evidence="1" type="primary">pdxH</name>
    <name type="ordered locus">Reut_A0815</name>
</gene>
<comment type="function">
    <text evidence="1">Catalyzes the oxidation of either pyridoxine 5'-phosphate (PNP) or pyridoxamine 5'-phosphate (PMP) into pyridoxal 5'-phosphate (PLP).</text>
</comment>
<comment type="catalytic activity">
    <reaction evidence="1">
        <text>pyridoxamine 5'-phosphate + O2 + H2O = pyridoxal 5'-phosphate + H2O2 + NH4(+)</text>
        <dbReference type="Rhea" id="RHEA:15817"/>
        <dbReference type="ChEBI" id="CHEBI:15377"/>
        <dbReference type="ChEBI" id="CHEBI:15379"/>
        <dbReference type="ChEBI" id="CHEBI:16240"/>
        <dbReference type="ChEBI" id="CHEBI:28938"/>
        <dbReference type="ChEBI" id="CHEBI:58451"/>
        <dbReference type="ChEBI" id="CHEBI:597326"/>
        <dbReference type="EC" id="1.4.3.5"/>
    </reaction>
</comment>
<comment type="catalytic activity">
    <reaction evidence="1">
        <text>pyridoxine 5'-phosphate + O2 = pyridoxal 5'-phosphate + H2O2</text>
        <dbReference type="Rhea" id="RHEA:15149"/>
        <dbReference type="ChEBI" id="CHEBI:15379"/>
        <dbReference type="ChEBI" id="CHEBI:16240"/>
        <dbReference type="ChEBI" id="CHEBI:58589"/>
        <dbReference type="ChEBI" id="CHEBI:597326"/>
        <dbReference type="EC" id="1.4.3.5"/>
    </reaction>
</comment>
<comment type="cofactor">
    <cofactor evidence="1">
        <name>FMN</name>
        <dbReference type="ChEBI" id="CHEBI:58210"/>
    </cofactor>
    <text evidence="1">Binds 1 FMN per subunit.</text>
</comment>
<comment type="pathway">
    <text evidence="1">Cofactor metabolism; pyridoxal 5'-phosphate salvage; pyridoxal 5'-phosphate from pyridoxamine 5'-phosphate: step 1/1.</text>
</comment>
<comment type="pathway">
    <text evidence="1">Cofactor metabolism; pyridoxal 5'-phosphate salvage; pyridoxal 5'-phosphate from pyridoxine 5'-phosphate: step 1/1.</text>
</comment>
<comment type="subunit">
    <text evidence="1">Homodimer.</text>
</comment>
<comment type="similarity">
    <text evidence="1">Belongs to the pyridoxamine 5'-phosphate oxidase family.</text>
</comment>
<sequence length="212" mass="23980">MTQLADLRRTYVLGSLNESDVAGDPIAQFKRWFDEAVTAKLPEPNAMTLATVGADGQPSARIVLLKGMDEKGFTFFTNYESRKGLDMAANPRAALLFHWVQLERQVRVEGRVEKVADDESDAYYASRPLGSRLGAWASEQSREVPGRDVLEQRESEYRAKFGENPPRPAHWGGYRLVPTALEFWQGRPSRLHDRIAYRVEADGSWKIVRLSP</sequence>
<feature type="chain" id="PRO_0000167743" description="Pyridoxine/pyridoxamine 5'-phosphate oxidase">
    <location>
        <begin position="1"/>
        <end position="212"/>
    </location>
</feature>
<feature type="binding site" evidence="1">
    <location>
        <begin position="8"/>
        <end position="11"/>
    </location>
    <ligand>
        <name>substrate</name>
    </ligand>
</feature>
<feature type="binding site" evidence="1">
    <location>
        <begin position="61"/>
        <end position="66"/>
    </location>
    <ligand>
        <name>FMN</name>
        <dbReference type="ChEBI" id="CHEBI:58210"/>
    </ligand>
</feature>
<feature type="binding site" evidence="1">
    <location>
        <position position="66"/>
    </location>
    <ligand>
        <name>substrate</name>
    </ligand>
</feature>
<feature type="binding site" evidence="1">
    <location>
        <begin position="76"/>
        <end position="77"/>
    </location>
    <ligand>
        <name>FMN</name>
        <dbReference type="ChEBI" id="CHEBI:58210"/>
    </ligand>
</feature>
<feature type="binding site" evidence="1">
    <location>
        <position position="82"/>
    </location>
    <ligand>
        <name>FMN</name>
        <dbReference type="ChEBI" id="CHEBI:58210"/>
    </ligand>
</feature>
<feature type="binding site" evidence="1">
    <location>
        <position position="83"/>
    </location>
    <ligand>
        <name>FMN</name>
        <dbReference type="ChEBI" id="CHEBI:58210"/>
    </ligand>
</feature>
<feature type="binding site" evidence="1">
    <location>
        <position position="105"/>
    </location>
    <ligand>
        <name>FMN</name>
        <dbReference type="ChEBI" id="CHEBI:58210"/>
    </ligand>
</feature>
<feature type="binding site" evidence="1">
    <location>
        <position position="123"/>
    </location>
    <ligand>
        <name>substrate</name>
    </ligand>
</feature>
<feature type="binding site" evidence="1">
    <location>
        <position position="127"/>
    </location>
    <ligand>
        <name>substrate</name>
    </ligand>
</feature>
<feature type="binding site" evidence="1">
    <location>
        <position position="131"/>
    </location>
    <ligand>
        <name>substrate</name>
    </ligand>
</feature>
<feature type="binding site" evidence="1">
    <location>
        <begin position="140"/>
        <end position="141"/>
    </location>
    <ligand>
        <name>FMN</name>
        <dbReference type="ChEBI" id="CHEBI:58210"/>
    </ligand>
</feature>
<feature type="binding site" evidence="1">
    <location>
        <position position="184"/>
    </location>
    <ligand>
        <name>FMN</name>
        <dbReference type="ChEBI" id="CHEBI:58210"/>
    </ligand>
</feature>
<feature type="binding site" evidence="1">
    <location>
        <begin position="190"/>
        <end position="192"/>
    </location>
    <ligand>
        <name>substrate</name>
    </ligand>
</feature>
<feature type="binding site" evidence="1">
    <location>
        <position position="194"/>
    </location>
    <ligand>
        <name>FMN</name>
        <dbReference type="ChEBI" id="CHEBI:58210"/>
    </ligand>
</feature>